<protein>
    <recommendedName>
        <fullName evidence="1">CinA-like protein</fullName>
    </recommendedName>
</protein>
<sequence>MPVSARAGIVVTGTEVLTGRVQDANGPWIADRLLELGVELAHITICGDRPHDIEAQLRFLADQGVDLIVTSGGLGPTADDMTVEVVARFCGRELVLDAEVEEKIANILKKLMARNPAIQSALDPGTFESLRAANRKQAMVPAGAQVLDPVGTAPGVVVPGKPAVIVLPGPPRELQPMWHTAIQTPAAQQAIAGRTVYRQEMLRMFGLPESGLAETLREAEAAVPGFGQLEITTCLRRGEIEMVTRYEPTAATAYAQLTKLLRDKHGDQLYSEDGSRVDDLVARLLAGRRIATAESCTAGLLAARLTDRPGSSDYVAGGVVAYSNEAKAELLGVDPALIEAHGAVSEPVAQAMAAGARQRFAADTAVAITGIAGPGGGTEEKPVGTVCFSVQVGPPGATARSDTRTMRLPGNRSDIRERSTTVAMHLLRRLLTDA</sequence>
<organism>
    <name type="scientific">Mycolicibacterium paratuberculosis (strain ATCC BAA-968 / K-10)</name>
    <name type="common">Mycobacterium paratuberculosis</name>
    <dbReference type="NCBI Taxonomy" id="262316"/>
    <lineage>
        <taxon>Bacteria</taxon>
        <taxon>Bacillati</taxon>
        <taxon>Actinomycetota</taxon>
        <taxon>Actinomycetes</taxon>
        <taxon>Mycobacteriales</taxon>
        <taxon>Mycobacteriaceae</taxon>
        <taxon>Mycobacterium</taxon>
        <taxon>Mycobacterium avium complex (MAC)</taxon>
    </lineage>
</organism>
<proteinExistence type="inferred from homology"/>
<keyword id="KW-1185">Reference proteome</keyword>
<gene>
    <name evidence="1" type="primary">cinA</name>
    <name type="ordered locus">MAP_1625</name>
</gene>
<dbReference type="EMBL" id="AE016958">
    <property type="protein sequence ID" value="AAS03942.1"/>
    <property type="molecule type" value="Genomic_DNA"/>
</dbReference>
<dbReference type="RefSeq" id="WP_010949282.1">
    <property type="nucleotide sequence ID" value="NZ_CP106873.1"/>
</dbReference>
<dbReference type="SMR" id="Q73ZH8"/>
<dbReference type="STRING" id="262316.MAP_1625"/>
<dbReference type="KEGG" id="mpa:MAP_1625"/>
<dbReference type="eggNOG" id="COG1058">
    <property type="taxonomic scope" value="Bacteria"/>
</dbReference>
<dbReference type="eggNOG" id="COG1546">
    <property type="taxonomic scope" value="Bacteria"/>
</dbReference>
<dbReference type="HOGENOM" id="CLU_030805_9_2_11"/>
<dbReference type="Proteomes" id="UP000000580">
    <property type="component" value="Chromosome"/>
</dbReference>
<dbReference type="CDD" id="cd00885">
    <property type="entry name" value="cinA"/>
    <property type="match status" value="1"/>
</dbReference>
<dbReference type="Gene3D" id="3.90.950.20">
    <property type="entry name" value="CinA-like"/>
    <property type="match status" value="1"/>
</dbReference>
<dbReference type="Gene3D" id="3.40.980.10">
    <property type="entry name" value="MoaB/Mog-like domain"/>
    <property type="match status" value="1"/>
</dbReference>
<dbReference type="HAMAP" id="MF_00226_B">
    <property type="entry name" value="CinA_B"/>
    <property type="match status" value="1"/>
</dbReference>
<dbReference type="InterPro" id="IPR050101">
    <property type="entry name" value="CinA"/>
</dbReference>
<dbReference type="InterPro" id="IPR036653">
    <property type="entry name" value="CinA-like_C"/>
</dbReference>
<dbReference type="InterPro" id="IPR008136">
    <property type="entry name" value="CinA_C"/>
</dbReference>
<dbReference type="InterPro" id="IPR008135">
    <property type="entry name" value="Competence-induced_CinA"/>
</dbReference>
<dbReference type="InterPro" id="IPR036425">
    <property type="entry name" value="MoaB/Mog-like_dom_sf"/>
</dbReference>
<dbReference type="InterPro" id="IPR001453">
    <property type="entry name" value="MoaB/Mog_dom"/>
</dbReference>
<dbReference type="NCBIfam" id="TIGR00200">
    <property type="entry name" value="cinA_nterm"/>
    <property type="match status" value="1"/>
</dbReference>
<dbReference type="NCBIfam" id="TIGR00199">
    <property type="entry name" value="PncC_domain"/>
    <property type="match status" value="1"/>
</dbReference>
<dbReference type="NCBIfam" id="NF001813">
    <property type="entry name" value="PRK00549.1"/>
    <property type="match status" value="1"/>
</dbReference>
<dbReference type="PANTHER" id="PTHR13939">
    <property type="entry name" value="NICOTINAMIDE-NUCLEOTIDE AMIDOHYDROLASE PNCC"/>
    <property type="match status" value="1"/>
</dbReference>
<dbReference type="PANTHER" id="PTHR13939:SF0">
    <property type="entry name" value="NMN AMIDOHYDROLASE-LIKE PROTEIN YFAY"/>
    <property type="match status" value="1"/>
</dbReference>
<dbReference type="Pfam" id="PF02464">
    <property type="entry name" value="CinA"/>
    <property type="match status" value="1"/>
</dbReference>
<dbReference type="Pfam" id="PF00994">
    <property type="entry name" value="MoCF_biosynth"/>
    <property type="match status" value="1"/>
</dbReference>
<dbReference type="PIRSF" id="PIRSF006728">
    <property type="entry name" value="CinA"/>
    <property type="match status" value="1"/>
</dbReference>
<dbReference type="SMART" id="SM00852">
    <property type="entry name" value="MoCF_biosynth"/>
    <property type="match status" value="1"/>
</dbReference>
<dbReference type="SUPFAM" id="SSF142433">
    <property type="entry name" value="CinA-like"/>
    <property type="match status" value="1"/>
</dbReference>
<dbReference type="SUPFAM" id="SSF53218">
    <property type="entry name" value="Molybdenum cofactor biosynthesis proteins"/>
    <property type="match status" value="1"/>
</dbReference>
<evidence type="ECO:0000255" key="1">
    <source>
        <dbReference type="HAMAP-Rule" id="MF_00226"/>
    </source>
</evidence>
<reference key="1">
    <citation type="journal article" date="2005" name="Proc. Natl. Acad. Sci. U.S.A.">
        <title>The complete genome sequence of Mycobacterium avium subspecies paratuberculosis.</title>
        <authorList>
            <person name="Li L."/>
            <person name="Bannantine J.P."/>
            <person name="Zhang Q."/>
            <person name="Amonsin A."/>
            <person name="May B.J."/>
            <person name="Alt D."/>
            <person name="Banerji N."/>
            <person name="Kanjilal S."/>
            <person name="Kapur V."/>
        </authorList>
    </citation>
    <scope>NUCLEOTIDE SEQUENCE [LARGE SCALE GENOMIC DNA]</scope>
    <source>
        <strain>ATCC BAA-968 / K-10</strain>
    </source>
</reference>
<name>CINAL_MYCPA</name>
<feature type="chain" id="PRO_0000156769" description="CinA-like protein">
    <location>
        <begin position="1"/>
        <end position="434"/>
    </location>
</feature>
<accession>Q73ZH8</accession>
<comment type="similarity">
    <text evidence="1">Belongs to the CinA family.</text>
</comment>